<protein>
    <recommendedName>
        <fullName evidence="1">Cytochrome c-552</fullName>
        <ecNumber evidence="1">1.7.2.2</ecNumber>
    </recommendedName>
    <alternativeName>
        <fullName evidence="1">Ammonia-forming cytochrome c nitrite reductase</fullName>
        <shortName evidence="1">Cytochrome c nitrite reductase</shortName>
    </alternativeName>
</protein>
<comment type="function">
    <text evidence="1">Catalyzes the reduction of nitrite to ammonia, consuming six electrons in the process.</text>
</comment>
<comment type="catalytic activity">
    <reaction evidence="1">
        <text>6 Fe(III)-[cytochrome c] + NH4(+) + 2 H2O = 6 Fe(II)-[cytochrome c] + nitrite + 8 H(+)</text>
        <dbReference type="Rhea" id="RHEA:13089"/>
        <dbReference type="Rhea" id="RHEA-COMP:10350"/>
        <dbReference type="Rhea" id="RHEA-COMP:14399"/>
        <dbReference type="ChEBI" id="CHEBI:15377"/>
        <dbReference type="ChEBI" id="CHEBI:15378"/>
        <dbReference type="ChEBI" id="CHEBI:16301"/>
        <dbReference type="ChEBI" id="CHEBI:28938"/>
        <dbReference type="ChEBI" id="CHEBI:29033"/>
        <dbReference type="ChEBI" id="CHEBI:29034"/>
        <dbReference type="EC" id="1.7.2.2"/>
    </reaction>
</comment>
<comment type="cofactor">
    <cofactor evidence="1">
        <name>Ca(2+)</name>
        <dbReference type="ChEBI" id="CHEBI:29108"/>
    </cofactor>
    <text evidence="1">Binds 1 Ca(2+) ion per monomer.</text>
</comment>
<comment type="cofactor">
    <cofactor evidence="1">
        <name>heme c</name>
        <dbReference type="ChEBI" id="CHEBI:61717"/>
    </cofactor>
    <text evidence="1">Binds 5 heme c groups covalently per monomer.</text>
</comment>
<comment type="pathway">
    <text evidence="1">Nitrogen metabolism; nitrate reduction (assimilation).</text>
</comment>
<comment type="subcellular location">
    <subcellularLocation>
        <location evidence="1">Periplasm</location>
    </subcellularLocation>
</comment>
<comment type="similarity">
    <text evidence="1">Belongs to the cytochrome c-552 family.</text>
</comment>
<reference key="1">
    <citation type="submission" date="2006-12" db="EMBL/GenBank/DDBJ databases">
        <title>Complete sequence of Shewanella sp. W3-18-1.</title>
        <authorList>
            <consortium name="US DOE Joint Genome Institute"/>
            <person name="Copeland A."/>
            <person name="Lucas S."/>
            <person name="Lapidus A."/>
            <person name="Barry K."/>
            <person name="Detter J.C."/>
            <person name="Glavina del Rio T."/>
            <person name="Hammon N."/>
            <person name="Israni S."/>
            <person name="Dalin E."/>
            <person name="Tice H."/>
            <person name="Pitluck S."/>
            <person name="Chain P."/>
            <person name="Malfatti S."/>
            <person name="Shin M."/>
            <person name="Vergez L."/>
            <person name="Schmutz J."/>
            <person name="Larimer F."/>
            <person name="Land M."/>
            <person name="Hauser L."/>
            <person name="Kyrpides N."/>
            <person name="Lykidis A."/>
            <person name="Tiedje J."/>
            <person name="Richardson P."/>
        </authorList>
    </citation>
    <scope>NUCLEOTIDE SEQUENCE [LARGE SCALE GENOMIC DNA]</scope>
    <source>
        <strain>W3-18-1</strain>
    </source>
</reference>
<organism>
    <name type="scientific">Shewanella sp. (strain W3-18-1)</name>
    <dbReference type="NCBI Taxonomy" id="351745"/>
    <lineage>
        <taxon>Bacteria</taxon>
        <taxon>Pseudomonadati</taxon>
        <taxon>Pseudomonadota</taxon>
        <taxon>Gammaproteobacteria</taxon>
        <taxon>Alteromonadales</taxon>
        <taxon>Shewanellaceae</taxon>
        <taxon>Shewanella</taxon>
    </lineage>
</organism>
<gene>
    <name evidence="1" type="primary">nrfA</name>
    <name type="ordered locus">Sputw3181_3486</name>
</gene>
<accession>A1RNQ3</accession>
<evidence type="ECO:0000255" key="1">
    <source>
        <dbReference type="HAMAP-Rule" id="MF_01182"/>
    </source>
</evidence>
<feature type="signal peptide" evidence="1">
    <location>
        <begin position="1"/>
        <end position="27"/>
    </location>
</feature>
<feature type="chain" id="PRO_5000204320" description="Cytochrome c-552">
    <location>
        <begin position="28"/>
        <end position="467"/>
    </location>
</feature>
<feature type="binding site" description="axial binding residue" evidence="1">
    <location>
        <position position="87"/>
    </location>
    <ligand>
        <name>heme c</name>
        <dbReference type="ChEBI" id="CHEBI:61717"/>
        <label>3</label>
    </ligand>
    <ligandPart>
        <name>Fe</name>
        <dbReference type="ChEBI" id="CHEBI:18248"/>
    </ligandPart>
</feature>
<feature type="binding site" description="covalent" evidence="1">
    <location>
        <position position="115"/>
    </location>
    <ligand>
        <name>heme</name>
        <dbReference type="ChEBI" id="CHEBI:30413"/>
        <label>1</label>
    </ligand>
</feature>
<feature type="binding site" description="covalent" evidence="1">
    <location>
        <position position="118"/>
    </location>
    <ligand>
        <name>heme</name>
        <dbReference type="ChEBI" id="CHEBI:30413"/>
        <label>1</label>
    </ligand>
</feature>
<feature type="binding site" description="axial binding residue" evidence="1">
    <location>
        <position position="119"/>
    </location>
    <ligand>
        <name>heme</name>
        <dbReference type="ChEBI" id="CHEBI:30413"/>
        <label>1</label>
    </ligand>
    <ligandPart>
        <name>Fe</name>
        <dbReference type="ChEBI" id="CHEBI:18248"/>
    </ligandPart>
</feature>
<feature type="binding site" description="covalent" evidence="1">
    <location>
        <position position="153"/>
    </location>
    <ligand>
        <name>heme c</name>
        <dbReference type="ChEBI" id="CHEBI:61717"/>
        <label>2</label>
    </ligand>
</feature>
<feature type="binding site" description="covalent" evidence="1">
    <location>
        <position position="156"/>
    </location>
    <ligand>
        <name>heme c</name>
        <dbReference type="ChEBI" id="CHEBI:61717"/>
        <label>2</label>
    </ligand>
</feature>
<feature type="binding site" description="axial binding residue" evidence="1">
    <location>
        <position position="157"/>
    </location>
    <ligand>
        <name>heme c</name>
        <dbReference type="ChEBI" id="CHEBI:61717"/>
        <label>2</label>
    </ligand>
    <ligandPart>
        <name>Fe</name>
        <dbReference type="ChEBI" id="CHEBI:18248"/>
    </ligandPart>
</feature>
<feature type="binding site" description="covalent" evidence="1">
    <location>
        <position position="195"/>
    </location>
    <ligand>
        <name>heme c</name>
        <dbReference type="ChEBI" id="CHEBI:61717"/>
        <label>3</label>
    </ligand>
</feature>
<feature type="binding site" description="covalent" evidence="1">
    <location>
        <position position="198"/>
    </location>
    <ligand>
        <name>heme c</name>
        <dbReference type="ChEBI" id="CHEBI:61717"/>
        <label>3</label>
    </ligand>
</feature>
<feature type="binding site" description="axial binding residue" evidence="1">
    <location>
        <position position="199"/>
    </location>
    <ligand>
        <name>heme c</name>
        <dbReference type="ChEBI" id="CHEBI:61717"/>
        <label>3</label>
    </ligand>
    <ligandPart>
        <name>Fe</name>
        <dbReference type="ChEBI" id="CHEBI:18248"/>
    </ligandPart>
</feature>
<feature type="binding site" evidence="1">
    <location>
        <position position="201"/>
    </location>
    <ligand>
        <name>Ca(2+)</name>
        <dbReference type="ChEBI" id="CHEBI:29108"/>
    </ligand>
</feature>
<feature type="binding site" evidence="1">
    <location>
        <position position="202"/>
    </location>
    <ligand>
        <name>Ca(2+)</name>
        <dbReference type="ChEBI" id="CHEBI:29108"/>
    </ligand>
</feature>
<feature type="binding site" evidence="1">
    <location>
        <position position="202"/>
    </location>
    <ligand>
        <name>substrate</name>
    </ligand>
</feature>
<feature type="binding site" evidence="1">
    <location>
        <position position="250"/>
    </location>
    <ligand>
        <name>Ca(2+)</name>
        <dbReference type="ChEBI" id="CHEBI:29108"/>
    </ligand>
</feature>
<feature type="binding site" evidence="1">
    <location>
        <position position="252"/>
    </location>
    <ligand>
        <name>Ca(2+)</name>
        <dbReference type="ChEBI" id="CHEBI:29108"/>
    </ligand>
</feature>
<feature type="binding site" evidence="1">
    <location>
        <position position="253"/>
    </location>
    <ligand>
        <name>substrate</name>
    </ligand>
</feature>
<feature type="binding site" description="axial binding residue" evidence="1">
    <location>
        <position position="264"/>
    </location>
    <ligand>
        <name>heme c</name>
        <dbReference type="ChEBI" id="CHEBI:61717"/>
        <label>5</label>
    </ligand>
    <ligandPart>
        <name>Fe</name>
        <dbReference type="ChEBI" id="CHEBI:18248"/>
    </ligandPart>
</feature>
<feature type="binding site" description="covalent" evidence="1">
    <location>
        <position position="271"/>
    </location>
    <ligand>
        <name>heme c</name>
        <dbReference type="ChEBI" id="CHEBI:61717"/>
        <label>4</label>
    </ligand>
</feature>
<feature type="binding site" description="covalent" evidence="1">
    <location>
        <position position="274"/>
    </location>
    <ligand>
        <name>heme c</name>
        <dbReference type="ChEBI" id="CHEBI:61717"/>
        <label>4</label>
    </ligand>
</feature>
<feature type="binding site" description="axial binding residue" evidence="1">
    <location>
        <position position="275"/>
    </location>
    <ligand>
        <name>heme c</name>
        <dbReference type="ChEBI" id="CHEBI:61717"/>
        <label>4</label>
    </ligand>
    <ligandPart>
        <name>Fe</name>
        <dbReference type="ChEBI" id="CHEBI:18248"/>
    </ligandPart>
</feature>
<feature type="binding site" description="axial binding residue" evidence="1">
    <location>
        <position position="290"/>
    </location>
    <ligand>
        <name>heme c</name>
        <dbReference type="ChEBI" id="CHEBI:61717"/>
        <label>2</label>
    </ligand>
    <ligandPart>
        <name>Fe</name>
        <dbReference type="ChEBI" id="CHEBI:18248"/>
    </ligandPart>
</feature>
<feature type="binding site" description="covalent" evidence="1">
    <location>
        <position position="303"/>
    </location>
    <ligand>
        <name>heme c</name>
        <dbReference type="ChEBI" id="CHEBI:61717"/>
        <label>5</label>
    </ligand>
</feature>
<feature type="binding site" description="covalent" evidence="1">
    <location>
        <position position="306"/>
    </location>
    <ligand>
        <name>heme c</name>
        <dbReference type="ChEBI" id="CHEBI:61717"/>
        <label>5</label>
    </ligand>
</feature>
<feature type="binding site" description="axial binding residue" evidence="1">
    <location>
        <position position="307"/>
    </location>
    <ligand>
        <name>heme c</name>
        <dbReference type="ChEBI" id="CHEBI:61717"/>
        <label>5</label>
    </ligand>
    <ligandPart>
        <name>Fe</name>
        <dbReference type="ChEBI" id="CHEBI:18248"/>
    </ligandPart>
</feature>
<feature type="binding site" description="axial binding residue" evidence="1">
    <location>
        <position position="382"/>
    </location>
    <ligand>
        <name>heme c</name>
        <dbReference type="ChEBI" id="CHEBI:61717"/>
        <label>4</label>
    </ligand>
    <ligandPart>
        <name>Fe</name>
        <dbReference type="ChEBI" id="CHEBI:18248"/>
    </ligandPart>
</feature>
<keyword id="KW-0106">Calcium</keyword>
<keyword id="KW-0249">Electron transport</keyword>
<keyword id="KW-0349">Heme</keyword>
<keyword id="KW-0408">Iron</keyword>
<keyword id="KW-0479">Metal-binding</keyword>
<keyword id="KW-0560">Oxidoreductase</keyword>
<keyword id="KW-0574">Periplasm</keyword>
<keyword id="KW-0732">Signal</keyword>
<keyword id="KW-0813">Transport</keyword>
<dbReference type="EC" id="1.7.2.2" evidence="1"/>
<dbReference type="EMBL" id="CP000503">
    <property type="protein sequence ID" value="ABM26298.1"/>
    <property type="molecule type" value="Genomic_DNA"/>
</dbReference>
<dbReference type="RefSeq" id="WP_011790735.1">
    <property type="nucleotide sequence ID" value="NC_008750.1"/>
</dbReference>
<dbReference type="SMR" id="A1RNQ3"/>
<dbReference type="GeneID" id="67442149"/>
<dbReference type="KEGG" id="shw:Sputw3181_3486"/>
<dbReference type="HOGENOM" id="CLU_035040_1_0_6"/>
<dbReference type="UniPathway" id="UPA00653"/>
<dbReference type="Proteomes" id="UP000002597">
    <property type="component" value="Chromosome"/>
</dbReference>
<dbReference type="GO" id="GO:0030288">
    <property type="term" value="C:outer membrane-bounded periplasmic space"/>
    <property type="evidence" value="ECO:0007669"/>
    <property type="project" value="TreeGrafter"/>
</dbReference>
<dbReference type="GO" id="GO:0005509">
    <property type="term" value="F:calcium ion binding"/>
    <property type="evidence" value="ECO:0007669"/>
    <property type="project" value="UniProtKB-UniRule"/>
</dbReference>
<dbReference type="GO" id="GO:0020037">
    <property type="term" value="F:heme binding"/>
    <property type="evidence" value="ECO:0007669"/>
    <property type="project" value="InterPro"/>
</dbReference>
<dbReference type="GO" id="GO:0005506">
    <property type="term" value="F:iron ion binding"/>
    <property type="evidence" value="ECO:0007669"/>
    <property type="project" value="UniProtKB-UniRule"/>
</dbReference>
<dbReference type="GO" id="GO:0042279">
    <property type="term" value="F:nitrite reductase (cytochrome, ammonia-forming) activity"/>
    <property type="evidence" value="ECO:0007669"/>
    <property type="project" value="UniProtKB-UniRule"/>
</dbReference>
<dbReference type="GO" id="GO:0019645">
    <property type="term" value="P:anaerobic electron transport chain"/>
    <property type="evidence" value="ECO:0007669"/>
    <property type="project" value="TreeGrafter"/>
</dbReference>
<dbReference type="GO" id="GO:0042128">
    <property type="term" value="P:nitrate assimilation"/>
    <property type="evidence" value="ECO:0007669"/>
    <property type="project" value="UniProtKB-UniRule"/>
</dbReference>
<dbReference type="CDD" id="cd00548">
    <property type="entry name" value="NrfA-like"/>
    <property type="match status" value="1"/>
</dbReference>
<dbReference type="FunFam" id="1.10.1130.10:FF:000002">
    <property type="entry name" value="Cytochrome c-552"/>
    <property type="match status" value="1"/>
</dbReference>
<dbReference type="FunFam" id="1.20.140.10:FF:000014">
    <property type="entry name" value="Cytochrome c-552"/>
    <property type="match status" value="1"/>
</dbReference>
<dbReference type="Gene3D" id="1.20.140.10">
    <property type="entry name" value="Butyryl-CoA Dehydrogenase, subunit A, domain 3"/>
    <property type="match status" value="1"/>
</dbReference>
<dbReference type="Gene3D" id="1.10.1130.10">
    <property type="entry name" value="Flavocytochrome C3, Chain A"/>
    <property type="match status" value="1"/>
</dbReference>
<dbReference type="HAMAP" id="MF_01182">
    <property type="entry name" value="Cytochrom_C552"/>
    <property type="match status" value="1"/>
</dbReference>
<dbReference type="InterPro" id="IPR003321">
    <property type="entry name" value="Cyt_c552"/>
</dbReference>
<dbReference type="InterPro" id="IPR017570">
    <property type="entry name" value="Cyt_c_NO2Rdtase_formate-dep"/>
</dbReference>
<dbReference type="InterPro" id="IPR036280">
    <property type="entry name" value="Multihaem_cyt_sf"/>
</dbReference>
<dbReference type="NCBIfam" id="TIGR03152">
    <property type="entry name" value="cyto_c552_HCOOH"/>
    <property type="match status" value="1"/>
</dbReference>
<dbReference type="NCBIfam" id="NF008339">
    <property type="entry name" value="PRK11125.1"/>
    <property type="match status" value="1"/>
</dbReference>
<dbReference type="PANTHER" id="PTHR30633:SF0">
    <property type="entry name" value="CYTOCHROME C-552"/>
    <property type="match status" value="1"/>
</dbReference>
<dbReference type="PANTHER" id="PTHR30633">
    <property type="entry name" value="CYTOCHROME C-552 RESPIRATORY NITRITE REDUCTASE"/>
    <property type="match status" value="1"/>
</dbReference>
<dbReference type="Pfam" id="PF02335">
    <property type="entry name" value="Cytochrom_C552"/>
    <property type="match status" value="1"/>
</dbReference>
<dbReference type="PIRSF" id="PIRSF000243">
    <property type="entry name" value="Cyt_c552"/>
    <property type="match status" value="1"/>
</dbReference>
<dbReference type="SUPFAM" id="SSF48695">
    <property type="entry name" value="Multiheme cytochromes"/>
    <property type="match status" value="1"/>
</dbReference>
<dbReference type="PROSITE" id="PS51008">
    <property type="entry name" value="MULTIHEME_CYTC"/>
    <property type="match status" value="1"/>
</dbReference>
<sequence length="467" mass="52289">MMKKMTGKSFALSALVAASFMAAGAMASDKTEPRNEVYKDKFKNQYNSWHDTAKSEELVDALEQDPNMVILWAGYPFAKDYKAPRGHMYAVTDVRNTLRTGAPKDAEDGPLPMACWSCKSPDVPRLIEEQGEDGYFKGKWAKGGPEVTNAIGCGDCHDKGSPKLRISRPYVDRALDAIGTPFSKASKQDKESMVCAQCHVEYYFEKTEDKKGFVKFPWDMGVTVEKMEVYYDSIQFSDWTHALSKAPMLKAQHPEYETWKMGIHGMNNVSCVDCHMPKVTSADGKKFTDHKVGNPFDRFEETCATCHSQTKEFLVGVTNERKAKVKEMKLKAEEQLVKAHFEAEAAWKAGATEEEMKPILTDIRHSQWRWDLAIASHGVAAHAPDEALRILGTSVNKAADARVKLAQLLGKKGITDPVAVPDISTKAKAQAVLGMDMKQLVEEKEAFKKNILPKWDEEAKKREATYK</sequence>
<proteinExistence type="inferred from homology"/>
<name>NRFA_SHESW</name>